<sequence length="142" mass="16204">MRGAVLRLGAARGQLRLEQEHLLEDIAHVRQRLDDEARQRQEAEAAARALARFAQEAEAARVELQKKAQALQEECGYLRRHHQEEAQAEARDALKCDVTSALREIRAQLEGHAVQSTLQQEEWFRVRLDRLSEAAKVNTDAM</sequence>
<name>NFH_PIG</name>
<dbReference type="PIR" id="C22702">
    <property type="entry name" value="C22702"/>
</dbReference>
<dbReference type="SMR" id="P12037"/>
<dbReference type="STRING" id="9823.ENSSSCP00000010650"/>
<dbReference type="PeptideAtlas" id="P12037"/>
<dbReference type="InParanoid" id="P12037"/>
<dbReference type="Proteomes" id="UP000008227">
    <property type="component" value="Unplaced"/>
</dbReference>
<dbReference type="Proteomes" id="UP000314985">
    <property type="component" value="Unplaced"/>
</dbReference>
<dbReference type="Proteomes" id="UP000694570">
    <property type="component" value="Unplaced"/>
</dbReference>
<dbReference type="Proteomes" id="UP000694571">
    <property type="component" value="Unplaced"/>
</dbReference>
<dbReference type="Proteomes" id="UP000694720">
    <property type="component" value="Unplaced"/>
</dbReference>
<dbReference type="Proteomes" id="UP000694722">
    <property type="component" value="Unplaced"/>
</dbReference>
<dbReference type="Proteomes" id="UP000694723">
    <property type="component" value="Unplaced"/>
</dbReference>
<dbReference type="Proteomes" id="UP000694724">
    <property type="component" value="Unplaced"/>
</dbReference>
<dbReference type="Proteomes" id="UP000694725">
    <property type="component" value="Unplaced"/>
</dbReference>
<dbReference type="Proteomes" id="UP000694726">
    <property type="component" value="Unplaced"/>
</dbReference>
<dbReference type="Proteomes" id="UP000694727">
    <property type="component" value="Unplaced"/>
</dbReference>
<dbReference type="Proteomes" id="UP000694728">
    <property type="component" value="Unplaced"/>
</dbReference>
<dbReference type="GO" id="GO:0030424">
    <property type="term" value="C:axon"/>
    <property type="evidence" value="ECO:0007669"/>
    <property type="project" value="UniProtKB-SubCell"/>
</dbReference>
<dbReference type="GO" id="GO:0005883">
    <property type="term" value="C:neurofilament"/>
    <property type="evidence" value="ECO:0000314"/>
    <property type="project" value="CAFA"/>
</dbReference>
<dbReference type="Gene3D" id="1.20.5.500">
    <property type="entry name" value="Single helix bin"/>
    <property type="match status" value="1"/>
</dbReference>
<dbReference type="Gene3D" id="1.20.5.1160">
    <property type="entry name" value="Vasodilator-stimulated phosphoprotein"/>
    <property type="match status" value="1"/>
</dbReference>
<dbReference type="InterPro" id="IPR039008">
    <property type="entry name" value="IF_rod_dom"/>
</dbReference>
<dbReference type="PANTHER" id="PTHR23214:SF1">
    <property type="entry name" value="NEUROFILAMENT HEAVY POLYPEPTIDE"/>
    <property type="match status" value="1"/>
</dbReference>
<dbReference type="PANTHER" id="PTHR23214">
    <property type="entry name" value="NEUROFILAMENT TRIPLET H PROTEIN"/>
    <property type="match status" value="1"/>
</dbReference>
<dbReference type="Pfam" id="PF00038">
    <property type="entry name" value="Filament"/>
    <property type="match status" value="1"/>
</dbReference>
<dbReference type="PROSITE" id="PS51842">
    <property type="entry name" value="IF_ROD_2"/>
    <property type="match status" value="1"/>
</dbReference>
<gene>
    <name type="primary">NEFH</name>
</gene>
<protein>
    <recommendedName>
        <fullName>Neurofilament heavy polypeptide</fullName>
        <shortName>NF-H</shortName>
    </recommendedName>
    <alternativeName>
        <fullName>200 kDa neurofilament protein</fullName>
    </alternativeName>
    <alternativeName>
        <fullName>Neurofilament triplet H protein</fullName>
    </alternativeName>
</protein>
<proteinExistence type="evidence at protein level"/>
<keyword id="KW-0966">Cell projection</keyword>
<keyword id="KW-0175">Coiled coil</keyword>
<keyword id="KW-0963">Cytoplasm</keyword>
<keyword id="KW-0206">Cytoskeleton</keyword>
<keyword id="KW-0903">Direct protein sequencing</keyword>
<keyword id="KW-0403">Intermediate filament</keyword>
<keyword id="KW-0597">Phosphoprotein</keyword>
<keyword id="KW-1185">Reference proteome</keyword>
<reference key="1">
    <citation type="journal article" date="1985" name="EMBO J.">
        <title>Protein-chemical characterization of NF-H, the largest mammalian neurofilament component; intermediate filament-type sequences followed by a unique carboxy-terminal extension.</title>
        <authorList>
            <person name="Geisler N."/>
            <person name="Fischer S."/>
            <person name="Vandekerckhove J."/>
            <person name="van Damme J."/>
            <person name="Plessmann U."/>
            <person name="Weber K."/>
        </authorList>
    </citation>
    <scope>PROTEIN SEQUENCE</scope>
</reference>
<accession>P12037</accession>
<feature type="chain" id="PRO_0000063802" description="Neurofilament heavy polypeptide">
    <location>
        <begin position="1" status="less than"/>
        <end position="142" status="greater than"/>
    </location>
</feature>
<feature type="domain" description="IF rod" evidence="5">
    <location>
        <begin position="1" status="less than"/>
        <end position="142" status="greater than"/>
    </location>
</feature>
<feature type="coiled-coil region" evidence="4">
    <location>
        <begin position="26"/>
        <end position="74"/>
    </location>
</feature>
<feature type="non-terminal residue">
    <location>
        <position position="1"/>
    </location>
</feature>
<feature type="non-terminal residue">
    <location>
        <position position="142"/>
    </location>
</feature>
<evidence type="ECO:0000250" key="1"/>
<evidence type="ECO:0000250" key="2">
    <source>
        <dbReference type="UniProtKB" id="P16884"/>
    </source>
</evidence>
<evidence type="ECO:0000250" key="3">
    <source>
        <dbReference type="UniProtKB" id="P19246"/>
    </source>
</evidence>
<evidence type="ECO:0000255" key="4"/>
<evidence type="ECO:0000255" key="5">
    <source>
        <dbReference type="PROSITE-ProRule" id="PRU01188"/>
    </source>
</evidence>
<comment type="function">
    <text evidence="3">Neurofilaments usually contain three intermediate filament proteins: NEFL, NEFM, and NEFH which are involved in the maintenance of neuronal caliber. NEFH has an important function in mature axons that is not subserved by the two smaller NF proteins. May additionally cooperate with the neuronal intermediate filament proteins PRPH and INA to form neuronal filamentous networks (By similarity).</text>
</comment>
<comment type="subunit">
    <text evidence="2">Forms heterodimers with NEFL; which can further hetero-oligomerize (in vitro) (By similarity). Forms heterodimers with INA (in vitro) (By similarity).</text>
</comment>
<comment type="subcellular location">
    <subcellularLocation>
        <location evidence="3">Cytoplasm</location>
        <location evidence="3">Cytoskeleton</location>
    </subcellularLocation>
    <subcellularLocation>
        <location evidence="3">Cell projection</location>
        <location evidence="3">Axon</location>
    </subcellularLocation>
</comment>
<comment type="PTM">
    <text>There are a number of repeats of the tripeptide K-S-P, NFH is phosphorylated on a number of the serines in this motif. It is thought that phosphorylation of NFH results in the formation of interfilament cross bridges that are important in the maintenance of axonal caliber.</text>
</comment>
<comment type="PTM">
    <text>Phosphorylation seems to play a major role in the functioning of the larger neurofilament polypeptides (NF-M and NF-H), the levels of phosphorylation being altered developmentally and coincidentally with a change in the neurofilament function.</text>
</comment>
<comment type="PTM">
    <text evidence="1">Phosphorylated in the head and rod regions by the PKC kinase PKN1, leading to the inhibition of polymerization.</text>
</comment>
<comment type="similarity">
    <text evidence="5">Belongs to the intermediate filament family.</text>
</comment>
<organism>
    <name type="scientific">Sus scrofa</name>
    <name type="common">Pig</name>
    <dbReference type="NCBI Taxonomy" id="9823"/>
    <lineage>
        <taxon>Eukaryota</taxon>
        <taxon>Metazoa</taxon>
        <taxon>Chordata</taxon>
        <taxon>Craniata</taxon>
        <taxon>Vertebrata</taxon>
        <taxon>Euteleostomi</taxon>
        <taxon>Mammalia</taxon>
        <taxon>Eutheria</taxon>
        <taxon>Laurasiatheria</taxon>
        <taxon>Artiodactyla</taxon>
        <taxon>Suina</taxon>
        <taxon>Suidae</taxon>
        <taxon>Sus</taxon>
    </lineage>
</organism>